<keyword id="KW-0963">Cytoplasm</keyword>
<keyword id="KW-0255">Endonuclease</keyword>
<keyword id="KW-0378">Hydrolase</keyword>
<keyword id="KW-0460">Magnesium</keyword>
<keyword id="KW-0479">Metal-binding</keyword>
<keyword id="KW-0540">Nuclease</keyword>
<keyword id="KW-1185">Reference proteome</keyword>
<organism>
    <name type="scientific">Campylobacter curvus (strain 525.92)</name>
    <dbReference type="NCBI Taxonomy" id="360105"/>
    <lineage>
        <taxon>Bacteria</taxon>
        <taxon>Pseudomonadati</taxon>
        <taxon>Campylobacterota</taxon>
        <taxon>Epsilonproteobacteria</taxon>
        <taxon>Campylobacterales</taxon>
        <taxon>Campylobacteraceae</taxon>
        <taxon>Campylobacter</taxon>
    </lineage>
</organism>
<sequence length="149" mass="16551">MKTVTLFSDGSCLNNPGAGGWAYILEFNGAVKKDSGGAAMTTNNQMELTAVIEGLKALKEPCEVRLFTDSSYVANAVNSWLDGWVKKNFIGSDKKPVKNIELWQEYLRVSRPHKVTASWIKAHNGHPQNEECDTMAREKATKFQNEADI</sequence>
<reference key="1">
    <citation type="submission" date="2007-07" db="EMBL/GenBank/DDBJ databases">
        <title>Genome sequence of Campylobacter curvus 525.92 isolated from human feces.</title>
        <authorList>
            <person name="Fouts D.E."/>
            <person name="Mongodin E.F."/>
            <person name="Puiu D."/>
            <person name="Sebastian Y."/>
            <person name="Miller W.G."/>
            <person name="Mandrell R.E."/>
            <person name="Lastovica A.J."/>
            <person name="Nelson K.E."/>
        </authorList>
    </citation>
    <scope>NUCLEOTIDE SEQUENCE [LARGE SCALE GENOMIC DNA]</scope>
    <source>
        <strain>525.92</strain>
    </source>
</reference>
<protein>
    <recommendedName>
        <fullName evidence="1">Ribonuclease H</fullName>
        <shortName evidence="1">RNase H</shortName>
        <ecNumber evidence="1">3.1.26.4</ecNumber>
    </recommendedName>
</protein>
<gene>
    <name evidence="1" type="primary">rnhA</name>
    <name type="ordered locus">Ccur92_19230</name>
    <name type="ORF">CCV52592_2066</name>
</gene>
<name>RNH_CAMC5</name>
<feature type="chain" id="PRO_0000332572" description="Ribonuclease H">
    <location>
        <begin position="1"/>
        <end position="149"/>
    </location>
</feature>
<feature type="domain" description="RNase H type-1" evidence="2">
    <location>
        <begin position="1"/>
        <end position="141"/>
    </location>
</feature>
<feature type="binding site" evidence="1">
    <location>
        <position position="9"/>
    </location>
    <ligand>
        <name>Mg(2+)</name>
        <dbReference type="ChEBI" id="CHEBI:18420"/>
        <label>1</label>
    </ligand>
</feature>
<feature type="binding site" evidence="1">
    <location>
        <position position="9"/>
    </location>
    <ligand>
        <name>Mg(2+)</name>
        <dbReference type="ChEBI" id="CHEBI:18420"/>
        <label>2</label>
    </ligand>
</feature>
<feature type="binding site" evidence="1">
    <location>
        <position position="47"/>
    </location>
    <ligand>
        <name>Mg(2+)</name>
        <dbReference type="ChEBI" id="CHEBI:18420"/>
        <label>1</label>
    </ligand>
</feature>
<feature type="binding site" evidence="1">
    <location>
        <position position="69"/>
    </location>
    <ligand>
        <name>Mg(2+)</name>
        <dbReference type="ChEBI" id="CHEBI:18420"/>
        <label>1</label>
    </ligand>
</feature>
<feature type="binding site" evidence="1">
    <location>
        <position position="133"/>
    </location>
    <ligand>
        <name>Mg(2+)</name>
        <dbReference type="ChEBI" id="CHEBI:18420"/>
        <label>2</label>
    </ligand>
</feature>
<dbReference type="EC" id="3.1.26.4" evidence="1"/>
<dbReference type="EMBL" id="CP000767">
    <property type="protein sequence ID" value="EAU00802.1"/>
    <property type="molecule type" value="Genomic_DNA"/>
</dbReference>
<dbReference type="RefSeq" id="WP_009649799.1">
    <property type="nucleotide sequence ID" value="NC_009715.2"/>
</dbReference>
<dbReference type="SMR" id="A7H185"/>
<dbReference type="STRING" id="360105.CCV52592_2066"/>
<dbReference type="KEGG" id="ccv:CCV52592_2066"/>
<dbReference type="HOGENOM" id="CLU_030894_6_0_7"/>
<dbReference type="OrthoDB" id="7845843at2"/>
<dbReference type="Proteomes" id="UP000006380">
    <property type="component" value="Chromosome"/>
</dbReference>
<dbReference type="GO" id="GO:0005737">
    <property type="term" value="C:cytoplasm"/>
    <property type="evidence" value="ECO:0007669"/>
    <property type="project" value="UniProtKB-SubCell"/>
</dbReference>
<dbReference type="GO" id="GO:0000287">
    <property type="term" value="F:magnesium ion binding"/>
    <property type="evidence" value="ECO:0007669"/>
    <property type="project" value="UniProtKB-UniRule"/>
</dbReference>
<dbReference type="GO" id="GO:0003676">
    <property type="term" value="F:nucleic acid binding"/>
    <property type="evidence" value="ECO:0007669"/>
    <property type="project" value="InterPro"/>
</dbReference>
<dbReference type="GO" id="GO:0004523">
    <property type="term" value="F:RNA-DNA hybrid ribonuclease activity"/>
    <property type="evidence" value="ECO:0007669"/>
    <property type="project" value="UniProtKB-UniRule"/>
</dbReference>
<dbReference type="GO" id="GO:0043137">
    <property type="term" value="P:DNA replication, removal of RNA primer"/>
    <property type="evidence" value="ECO:0007669"/>
    <property type="project" value="TreeGrafter"/>
</dbReference>
<dbReference type="CDD" id="cd09278">
    <property type="entry name" value="RNase_HI_prokaryote_like"/>
    <property type="match status" value="1"/>
</dbReference>
<dbReference type="FunFam" id="3.30.420.10:FF:000089">
    <property type="entry name" value="Ribonuclease H"/>
    <property type="match status" value="1"/>
</dbReference>
<dbReference type="Gene3D" id="3.30.420.10">
    <property type="entry name" value="Ribonuclease H-like superfamily/Ribonuclease H"/>
    <property type="match status" value="1"/>
</dbReference>
<dbReference type="HAMAP" id="MF_00042">
    <property type="entry name" value="RNase_H"/>
    <property type="match status" value="1"/>
</dbReference>
<dbReference type="InterPro" id="IPR050092">
    <property type="entry name" value="RNase_H"/>
</dbReference>
<dbReference type="InterPro" id="IPR012337">
    <property type="entry name" value="RNaseH-like_sf"/>
</dbReference>
<dbReference type="InterPro" id="IPR002156">
    <property type="entry name" value="RNaseH_domain"/>
</dbReference>
<dbReference type="InterPro" id="IPR036397">
    <property type="entry name" value="RNaseH_sf"/>
</dbReference>
<dbReference type="InterPro" id="IPR022892">
    <property type="entry name" value="RNaseHI"/>
</dbReference>
<dbReference type="NCBIfam" id="NF001236">
    <property type="entry name" value="PRK00203.1"/>
    <property type="match status" value="1"/>
</dbReference>
<dbReference type="PANTHER" id="PTHR10642">
    <property type="entry name" value="RIBONUCLEASE H1"/>
    <property type="match status" value="1"/>
</dbReference>
<dbReference type="PANTHER" id="PTHR10642:SF26">
    <property type="entry name" value="RIBONUCLEASE H1"/>
    <property type="match status" value="1"/>
</dbReference>
<dbReference type="Pfam" id="PF00075">
    <property type="entry name" value="RNase_H"/>
    <property type="match status" value="1"/>
</dbReference>
<dbReference type="SUPFAM" id="SSF53098">
    <property type="entry name" value="Ribonuclease H-like"/>
    <property type="match status" value="1"/>
</dbReference>
<dbReference type="PROSITE" id="PS50879">
    <property type="entry name" value="RNASE_H_1"/>
    <property type="match status" value="1"/>
</dbReference>
<evidence type="ECO:0000255" key="1">
    <source>
        <dbReference type="HAMAP-Rule" id="MF_00042"/>
    </source>
</evidence>
<evidence type="ECO:0000255" key="2">
    <source>
        <dbReference type="PROSITE-ProRule" id="PRU00408"/>
    </source>
</evidence>
<comment type="function">
    <text evidence="1">Endonuclease that specifically degrades the RNA of RNA-DNA hybrids.</text>
</comment>
<comment type="catalytic activity">
    <reaction evidence="1">
        <text>Endonucleolytic cleavage to 5'-phosphomonoester.</text>
        <dbReference type="EC" id="3.1.26.4"/>
    </reaction>
</comment>
<comment type="cofactor">
    <cofactor evidence="1">
        <name>Mg(2+)</name>
        <dbReference type="ChEBI" id="CHEBI:18420"/>
    </cofactor>
    <text evidence="1">Binds 1 Mg(2+) ion per subunit. May bind a second metal ion at a regulatory site, or after substrate binding.</text>
</comment>
<comment type="subunit">
    <text evidence="1">Monomer.</text>
</comment>
<comment type="subcellular location">
    <subcellularLocation>
        <location evidence="1">Cytoplasm</location>
    </subcellularLocation>
</comment>
<comment type="similarity">
    <text evidence="1">Belongs to the RNase H family.</text>
</comment>
<accession>A7H185</accession>
<proteinExistence type="inferred from homology"/>